<accession>Q7FNT2</accession>
<reference key="1">
    <citation type="journal article" date="2002" name="Mol. Biol. Evol.">
        <title>The plastid chromosome of Atropa belladonna and its comparison with that of Nicotiana tabacum: the role of RNA editing in generating divergence in the process of plant speciation.</title>
        <authorList>
            <person name="Schmitz-Linneweber C."/>
            <person name="Regel R."/>
            <person name="Du T.G."/>
            <person name="Hupfer H."/>
            <person name="Herrmann R.G."/>
            <person name="Maier R.M."/>
        </authorList>
    </citation>
    <scope>NUCLEOTIDE SEQUENCE [LARGE SCALE GENOMIC DNA]</scope>
    <source>
        <strain>cv. Ab5p(kan)</strain>
    </source>
</reference>
<sequence length="236" mass="26943">MTRRYWNINLEEMMEAGVHFGHGTRKWNPKMAPYISAKRKGIHITNLTRTARFLSEACDLVFDAASRGKQFLIVGTKNKAADSVEWAAIRARCHYVNKKWLGGMLTNWSTTETRLHKFRDLRMEQKTGRLNRLPKRDAAMLKRQLSRLQTYLGGIKYMTGVPDIVIIVDQHEEYTALRECITLGIPTICLTDTNCDPDLADISIPANDDAISSIRLILNKLVFAICEGRSSYIRNP</sequence>
<keyword id="KW-0150">Chloroplast</keyword>
<keyword id="KW-0934">Plastid</keyword>
<keyword id="KW-0687">Ribonucleoprotein</keyword>
<keyword id="KW-0689">Ribosomal protein</keyword>
<comment type="subcellular location">
    <subcellularLocation>
        <location>Plastid</location>
        <location>Chloroplast</location>
    </subcellularLocation>
</comment>
<comment type="similarity">
    <text evidence="1">Belongs to the universal ribosomal protein uS2 family.</text>
</comment>
<geneLocation type="chloroplast"/>
<evidence type="ECO:0000305" key="1"/>
<protein>
    <recommendedName>
        <fullName evidence="1">Small ribosomal subunit protein uS2c</fullName>
    </recommendedName>
    <alternativeName>
        <fullName>30S ribosomal protein S2, chloroplastic</fullName>
    </alternativeName>
</protein>
<organism>
    <name type="scientific">Atropa belladonna</name>
    <name type="common">Belladonna</name>
    <name type="synonym">Deadly nightshade</name>
    <dbReference type="NCBI Taxonomy" id="33113"/>
    <lineage>
        <taxon>Eukaryota</taxon>
        <taxon>Viridiplantae</taxon>
        <taxon>Streptophyta</taxon>
        <taxon>Embryophyta</taxon>
        <taxon>Tracheophyta</taxon>
        <taxon>Spermatophyta</taxon>
        <taxon>Magnoliopsida</taxon>
        <taxon>eudicotyledons</taxon>
        <taxon>Gunneridae</taxon>
        <taxon>Pentapetalae</taxon>
        <taxon>asterids</taxon>
        <taxon>lamiids</taxon>
        <taxon>Solanales</taxon>
        <taxon>Solanaceae</taxon>
        <taxon>Solanoideae</taxon>
        <taxon>Hyoscyameae</taxon>
        <taxon>Atropa</taxon>
    </lineage>
</organism>
<feature type="chain" id="PRO_0000352093" description="Small ribosomal subunit protein uS2c">
    <location>
        <begin position="1"/>
        <end position="236"/>
    </location>
</feature>
<name>RR2_ATRBE</name>
<gene>
    <name type="primary">rps2</name>
</gene>
<proteinExistence type="inferred from homology"/>
<dbReference type="EMBL" id="AJ316582">
    <property type="protein sequence ID" value="CAC88033.1"/>
    <property type="molecule type" value="Genomic_DNA"/>
</dbReference>
<dbReference type="RefSeq" id="NP_783221.1">
    <property type="nucleotide sequence ID" value="NC_004561.1"/>
</dbReference>
<dbReference type="SMR" id="Q7FNT2"/>
<dbReference type="GeneID" id="806486"/>
<dbReference type="GO" id="GO:0009507">
    <property type="term" value="C:chloroplast"/>
    <property type="evidence" value="ECO:0007669"/>
    <property type="project" value="UniProtKB-SubCell"/>
</dbReference>
<dbReference type="GO" id="GO:0005763">
    <property type="term" value="C:mitochondrial small ribosomal subunit"/>
    <property type="evidence" value="ECO:0007669"/>
    <property type="project" value="TreeGrafter"/>
</dbReference>
<dbReference type="GO" id="GO:0003735">
    <property type="term" value="F:structural constituent of ribosome"/>
    <property type="evidence" value="ECO:0007669"/>
    <property type="project" value="InterPro"/>
</dbReference>
<dbReference type="GO" id="GO:0006412">
    <property type="term" value="P:translation"/>
    <property type="evidence" value="ECO:0007669"/>
    <property type="project" value="UniProtKB-UniRule"/>
</dbReference>
<dbReference type="CDD" id="cd01425">
    <property type="entry name" value="RPS2"/>
    <property type="match status" value="1"/>
</dbReference>
<dbReference type="FunFam" id="3.40.50.10490:FF:000101">
    <property type="match status" value="1"/>
</dbReference>
<dbReference type="FunFam" id="1.10.287.610:FF:000001">
    <property type="entry name" value="30S ribosomal protein S2"/>
    <property type="match status" value="1"/>
</dbReference>
<dbReference type="FunFam" id="3.40.50.10490:FF:000008">
    <property type="entry name" value="30S ribosomal protein S2, chloroplastic"/>
    <property type="match status" value="1"/>
</dbReference>
<dbReference type="Gene3D" id="3.40.50.10490">
    <property type="entry name" value="Glucose-6-phosphate isomerase like protein, domain 1"/>
    <property type="match status" value="1"/>
</dbReference>
<dbReference type="Gene3D" id="1.10.287.610">
    <property type="entry name" value="Helix hairpin bin"/>
    <property type="match status" value="1"/>
</dbReference>
<dbReference type="HAMAP" id="MF_00291_B">
    <property type="entry name" value="Ribosomal_uS2_B"/>
    <property type="match status" value="1"/>
</dbReference>
<dbReference type="InterPro" id="IPR001865">
    <property type="entry name" value="Ribosomal_uS2"/>
</dbReference>
<dbReference type="InterPro" id="IPR005706">
    <property type="entry name" value="Ribosomal_uS2_bac/mit/plastid"/>
</dbReference>
<dbReference type="InterPro" id="IPR018130">
    <property type="entry name" value="Ribosomal_uS2_CS"/>
</dbReference>
<dbReference type="InterPro" id="IPR023591">
    <property type="entry name" value="Ribosomal_uS2_flav_dom_sf"/>
</dbReference>
<dbReference type="NCBIfam" id="TIGR01011">
    <property type="entry name" value="rpsB_bact"/>
    <property type="match status" value="1"/>
</dbReference>
<dbReference type="PANTHER" id="PTHR12534">
    <property type="entry name" value="30S RIBOSOMAL PROTEIN S2 PROKARYOTIC AND ORGANELLAR"/>
    <property type="match status" value="1"/>
</dbReference>
<dbReference type="PANTHER" id="PTHR12534:SF0">
    <property type="entry name" value="SMALL RIBOSOMAL SUBUNIT PROTEIN US2M"/>
    <property type="match status" value="1"/>
</dbReference>
<dbReference type="Pfam" id="PF00318">
    <property type="entry name" value="Ribosomal_S2"/>
    <property type="match status" value="1"/>
</dbReference>
<dbReference type="PRINTS" id="PR00395">
    <property type="entry name" value="RIBOSOMALS2"/>
</dbReference>
<dbReference type="SUPFAM" id="SSF52313">
    <property type="entry name" value="Ribosomal protein S2"/>
    <property type="match status" value="1"/>
</dbReference>
<dbReference type="PROSITE" id="PS00962">
    <property type="entry name" value="RIBOSOMAL_S2_1"/>
    <property type="match status" value="1"/>
</dbReference>
<dbReference type="PROSITE" id="PS00963">
    <property type="entry name" value="RIBOSOMAL_S2_2"/>
    <property type="match status" value="1"/>
</dbReference>